<keyword id="KW-1005">Bacterial flagellum biogenesis</keyword>
<keyword id="KW-1006">Bacterial flagellum protein export</keyword>
<keyword id="KW-0653">Protein transport</keyword>
<keyword id="KW-1185">Reference proteome</keyword>
<keyword id="KW-0813">Transport</keyword>
<organism>
    <name type="scientific">Bacillus subtilis (strain 168)</name>
    <dbReference type="NCBI Taxonomy" id="224308"/>
    <lineage>
        <taxon>Bacteria</taxon>
        <taxon>Bacillati</taxon>
        <taxon>Bacillota</taxon>
        <taxon>Bacilli</taxon>
        <taxon>Bacillales</taxon>
        <taxon>Bacillaceae</taxon>
        <taxon>Bacillus</taxon>
    </lineage>
</organism>
<dbReference type="EMBL" id="X56049">
    <property type="protein sequence ID" value="CAA39522.1"/>
    <property type="molecule type" value="Genomic_DNA"/>
</dbReference>
<dbReference type="EMBL" id="AL009126">
    <property type="protein sequence ID" value="CAB13496.2"/>
    <property type="molecule type" value="Genomic_DNA"/>
</dbReference>
<dbReference type="PIR" id="C42365">
    <property type="entry name" value="C42365"/>
</dbReference>
<dbReference type="RefSeq" id="NP_389505.2">
    <property type="nucleotide sequence ID" value="NC_000964.3"/>
</dbReference>
<dbReference type="RefSeq" id="WP_009967242.1">
    <property type="nucleotide sequence ID" value="NC_000964.3"/>
</dbReference>
<dbReference type="SMR" id="P23449"/>
<dbReference type="FunCoup" id="P23449">
    <property type="interactions" value="71"/>
</dbReference>
<dbReference type="STRING" id="224308.BSU16230"/>
<dbReference type="PaxDb" id="224308-BSU16230"/>
<dbReference type="EnsemblBacteria" id="CAB13496">
    <property type="protein sequence ID" value="CAB13496"/>
    <property type="gene ID" value="BSU_16230"/>
</dbReference>
<dbReference type="GeneID" id="938124"/>
<dbReference type="KEGG" id="bsu:BSU16230"/>
<dbReference type="PATRIC" id="fig|224308.43.peg.1717"/>
<dbReference type="eggNOG" id="COG1317">
    <property type="taxonomic scope" value="Bacteria"/>
</dbReference>
<dbReference type="InParanoid" id="P23449"/>
<dbReference type="OrthoDB" id="19020at2"/>
<dbReference type="PhylomeDB" id="P23449"/>
<dbReference type="BioCyc" id="BSUB:BSU16230-MONOMER"/>
<dbReference type="Proteomes" id="UP000001570">
    <property type="component" value="Chromosome"/>
</dbReference>
<dbReference type="GO" id="GO:0005829">
    <property type="term" value="C:cytosol"/>
    <property type="evidence" value="ECO:0000318"/>
    <property type="project" value="GO_Central"/>
</dbReference>
<dbReference type="GO" id="GO:0044780">
    <property type="term" value="P:bacterial-type flagellum assembly"/>
    <property type="evidence" value="ECO:0000315"/>
    <property type="project" value="CACAO"/>
</dbReference>
<dbReference type="GO" id="GO:0071978">
    <property type="term" value="P:bacterial-type flagellum-dependent swarming motility"/>
    <property type="evidence" value="ECO:0000315"/>
    <property type="project" value="CACAO"/>
</dbReference>
<dbReference type="GO" id="GO:0015031">
    <property type="term" value="P:protein transport"/>
    <property type="evidence" value="ECO:0007669"/>
    <property type="project" value="UniProtKB-KW"/>
</dbReference>
<dbReference type="InterPro" id="IPR018035">
    <property type="entry name" value="Flagellar_FliH/T3SS_HrpE"/>
</dbReference>
<dbReference type="InterPro" id="IPR022524">
    <property type="entry name" value="FliH_Bacilli"/>
</dbReference>
<dbReference type="InterPro" id="IPR051472">
    <property type="entry name" value="T3SS_Stator/FliH"/>
</dbReference>
<dbReference type="NCBIfam" id="TIGR03825">
    <property type="entry name" value="FliH_bacil"/>
    <property type="match status" value="1"/>
</dbReference>
<dbReference type="PANTHER" id="PTHR34982:SF1">
    <property type="entry name" value="FLAGELLAR ASSEMBLY PROTEIN FLIH"/>
    <property type="match status" value="1"/>
</dbReference>
<dbReference type="PANTHER" id="PTHR34982">
    <property type="entry name" value="YOP PROTEINS TRANSLOCATION PROTEIN L"/>
    <property type="match status" value="1"/>
</dbReference>
<dbReference type="Pfam" id="PF02108">
    <property type="entry name" value="FliH"/>
    <property type="match status" value="1"/>
</dbReference>
<gene>
    <name type="primary">fliH</name>
    <name type="ordered locus">BSU16230</name>
</gene>
<name>FLIH_BACSU</name>
<comment type="function">
    <text>Needed for flagellar regrowth and assembly.</text>
</comment>
<comment type="similarity">
    <text evidence="1">Belongs to the FliH family.</text>
</comment>
<proteinExistence type="inferred from homology"/>
<accession>P23449</accession>
<feature type="chain" id="PRO_0000180888" description="Probable flagellar assembly protein FliH">
    <location>
        <begin position="1"/>
        <end position="208"/>
    </location>
</feature>
<feature type="sequence conflict" description="In Ref. 1; CAA39522." evidence="1" ref="1">
    <original>S</original>
    <variation>T</variation>
    <location>
        <position position="73"/>
    </location>
</feature>
<protein>
    <recommendedName>
        <fullName>Probable flagellar assembly protein FliH</fullName>
    </recommendedName>
</protein>
<sequence>MARVKEEADRISEQANSHIENIRRQIEQEKNDWAAEKQKLIEEAKAEGFEQGVALGKAEAMKQYAELIGQANSITEMSRKAVEDKLEDANEEIVELAVALAKKVWQQKSDDKEAFLLLVQQVINEVKEYDDISIYVDPYYYETIFQQKDEIQQLLYKECRLGIYADEKAQKGTCYIETPFGRVDASVDTQLMQLKDKLLTALEAGAAE</sequence>
<reference key="1">
    <citation type="journal article" date="1991" name="J. Bacteriol.">
        <title>The flaA locus of Bacillus subtilis is part of a large operon coding for flagellar structures, motility functions, and an ATPase-like polypeptide.</title>
        <authorList>
            <person name="Albertini A.M."/>
            <person name="Caramori T."/>
            <person name="Crabb W.D."/>
            <person name="Scoffone F."/>
            <person name="Galizzi A."/>
        </authorList>
    </citation>
    <scope>NUCLEOTIDE SEQUENCE [GENOMIC DNA]</scope>
    <source>
        <strain>168</strain>
    </source>
</reference>
<reference key="2">
    <citation type="journal article" date="1997" name="Nature">
        <title>The complete genome sequence of the Gram-positive bacterium Bacillus subtilis.</title>
        <authorList>
            <person name="Kunst F."/>
            <person name="Ogasawara N."/>
            <person name="Moszer I."/>
            <person name="Albertini A.M."/>
            <person name="Alloni G."/>
            <person name="Azevedo V."/>
            <person name="Bertero M.G."/>
            <person name="Bessieres P."/>
            <person name="Bolotin A."/>
            <person name="Borchert S."/>
            <person name="Borriss R."/>
            <person name="Boursier L."/>
            <person name="Brans A."/>
            <person name="Braun M."/>
            <person name="Brignell S.C."/>
            <person name="Bron S."/>
            <person name="Brouillet S."/>
            <person name="Bruschi C.V."/>
            <person name="Caldwell B."/>
            <person name="Capuano V."/>
            <person name="Carter N.M."/>
            <person name="Choi S.-K."/>
            <person name="Codani J.-J."/>
            <person name="Connerton I.F."/>
            <person name="Cummings N.J."/>
            <person name="Daniel R.A."/>
            <person name="Denizot F."/>
            <person name="Devine K.M."/>
            <person name="Duesterhoeft A."/>
            <person name="Ehrlich S.D."/>
            <person name="Emmerson P.T."/>
            <person name="Entian K.-D."/>
            <person name="Errington J."/>
            <person name="Fabret C."/>
            <person name="Ferrari E."/>
            <person name="Foulger D."/>
            <person name="Fritz C."/>
            <person name="Fujita M."/>
            <person name="Fujita Y."/>
            <person name="Fuma S."/>
            <person name="Galizzi A."/>
            <person name="Galleron N."/>
            <person name="Ghim S.-Y."/>
            <person name="Glaser P."/>
            <person name="Goffeau A."/>
            <person name="Golightly E.J."/>
            <person name="Grandi G."/>
            <person name="Guiseppi G."/>
            <person name="Guy B.J."/>
            <person name="Haga K."/>
            <person name="Haiech J."/>
            <person name="Harwood C.R."/>
            <person name="Henaut A."/>
            <person name="Hilbert H."/>
            <person name="Holsappel S."/>
            <person name="Hosono S."/>
            <person name="Hullo M.-F."/>
            <person name="Itaya M."/>
            <person name="Jones L.-M."/>
            <person name="Joris B."/>
            <person name="Karamata D."/>
            <person name="Kasahara Y."/>
            <person name="Klaerr-Blanchard M."/>
            <person name="Klein C."/>
            <person name="Kobayashi Y."/>
            <person name="Koetter P."/>
            <person name="Koningstein G."/>
            <person name="Krogh S."/>
            <person name="Kumano M."/>
            <person name="Kurita K."/>
            <person name="Lapidus A."/>
            <person name="Lardinois S."/>
            <person name="Lauber J."/>
            <person name="Lazarevic V."/>
            <person name="Lee S.-M."/>
            <person name="Levine A."/>
            <person name="Liu H."/>
            <person name="Masuda S."/>
            <person name="Mauel C."/>
            <person name="Medigue C."/>
            <person name="Medina N."/>
            <person name="Mellado R.P."/>
            <person name="Mizuno M."/>
            <person name="Moestl D."/>
            <person name="Nakai S."/>
            <person name="Noback M."/>
            <person name="Noone D."/>
            <person name="O'Reilly M."/>
            <person name="Ogawa K."/>
            <person name="Ogiwara A."/>
            <person name="Oudega B."/>
            <person name="Park S.-H."/>
            <person name="Parro V."/>
            <person name="Pohl T.M."/>
            <person name="Portetelle D."/>
            <person name="Porwollik S."/>
            <person name="Prescott A.M."/>
            <person name="Presecan E."/>
            <person name="Pujic P."/>
            <person name="Purnelle B."/>
            <person name="Rapoport G."/>
            <person name="Rey M."/>
            <person name="Reynolds S."/>
            <person name="Rieger M."/>
            <person name="Rivolta C."/>
            <person name="Rocha E."/>
            <person name="Roche B."/>
            <person name="Rose M."/>
            <person name="Sadaie Y."/>
            <person name="Sato T."/>
            <person name="Scanlan E."/>
            <person name="Schleich S."/>
            <person name="Schroeter R."/>
            <person name="Scoffone F."/>
            <person name="Sekiguchi J."/>
            <person name="Sekowska A."/>
            <person name="Seror S.J."/>
            <person name="Serror P."/>
            <person name="Shin B.-S."/>
            <person name="Soldo B."/>
            <person name="Sorokin A."/>
            <person name="Tacconi E."/>
            <person name="Takagi T."/>
            <person name="Takahashi H."/>
            <person name="Takemaru K."/>
            <person name="Takeuchi M."/>
            <person name="Tamakoshi A."/>
            <person name="Tanaka T."/>
            <person name="Terpstra P."/>
            <person name="Tognoni A."/>
            <person name="Tosato V."/>
            <person name="Uchiyama S."/>
            <person name="Vandenbol M."/>
            <person name="Vannier F."/>
            <person name="Vassarotti A."/>
            <person name="Viari A."/>
            <person name="Wambutt R."/>
            <person name="Wedler E."/>
            <person name="Wedler H."/>
            <person name="Weitzenegger T."/>
            <person name="Winters P."/>
            <person name="Wipat A."/>
            <person name="Yamamoto H."/>
            <person name="Yamane K."/>
            <person name="Yasumoto K."/>
            <person name="Yata K."/>
            <person name="Yoshida K."/>
            <person name="Yoshikawa H.-F."/>
            <person name="Zumstein E."/>
            <person name="Yoshikawa H."/>
            <person name="Danchin A."/>
        </authorList>
    </citation>
    <scope>NUCLEOTIDE SEQUENCE [LARGE SCALE GENOMIC DNA]</scope>
    <source>
        <strain>168</strain>
    </source>
</reference>
<reference key="3">
    <citation type="journal article" date="2009" name="Microbiology">
        <title>From a consortium sequence to a unified sequence: the Bacillus subtilis 168 reference genome a decade later.</title>
        <authorList>
            <person name="Barbe V."/>
            <person name="Cruveiller S."/>
            <person name="Kunst F."/>
            <person name="Lenoble P."/>
            <person name="Meurice G."/>
            <person name="Sekowska A."/>
            <person name="Vallenet D."/>
            <person name="Wang T."/>
            <person name="Moszer I."/>
            <person name="Medigue C."/>
            <person name="Danchin A."/>
        </authorList>
    </citation>
    <scope>SEQUENCE REVISION TO 73</scope>
</reference>
<evidence type="ECO:0000305" key="1"/>